<feature type="chain" id="PRO_0000232003" description="Phenylalanine--tRNA ligase alpha subunit">
    <location>
        <begin position="1"/>
        <end position="344"/>
    </location>
</feature>
<feature type="binding site" evidence="1">
    <location>
        <position position="256"/>
    </location>
    <ligand>
        <name>Mg(2+)</name>
        <dbReference type="ChEBI" id="CHEBI:18420"/>
        <note>shared with beta subunit</note>
    </ligand>
</feature>
<sequence length="344" mass="39732">MQTKIKNLTTQFHTSLQKNKHDLDQLMTLDKEFLGKKGILFELTQELKSLPHAQKAVAGKLINVLKQEIILTLQKEKEILQRNQLNAKLLQEEIDPTLPGLKFFQGSAHPLNQIIEQIEDLFLSLGYEIKEGNEIETDFYNFEMLNMGKGHPARAMQDSFYIDPQKLLRTHTSNVQVKEMKARQGGPLKIISPGKVYRKDDDDATHSHQFMQLEGLVIDKNINFSHLKETLLLITKELFGTSQEIHLRPSYFPFTEPSIEVDLVITKKDGTKEYLEILGAGLVHPQVLKNANYDPEKYQGFAFGIGIERIAMIKYQIDNIRHFYTNDIRFLKQFARNTTNNENY</sequence>
<keyword id="KW-0030">Aminoacyl-tRNA synthetase</keyword>
<keyword id="KW-0067">ATP-binding</keyword>
<keyword id="KW-0963">Cytoplasm</keyword>
<keyword id="KW-0436">Ligase</keyword>
<keyword id="KW-0460">Magnesium</keyword>
<keyword id="KW-0479">Metal-binding</keyword>
<keyword id="KW-0547">Nucleotide-binding</keyword>
<keyword id="KW-0648">Protein biosynthesis</keyword>
<reference key="1">
    <citation type="journal article" date="2004" name="Nat. Genet.">
        <title>Reductive evolution suggested from the complete genome sequence of a plant-pathogenic phytoplasma.</title>
        <authorList>
            <person name="Oshima K."/>
            <person name="Kakizawa S."/>
            <person name="Nishigawa H."/>
            <person name="Jung H.-Y."/>
            <person name="Wei W."/>
            <person name="Suzuki S."/>
            <person name="Arashida R."/>
            <person name="Nakata D."/>
            <person name="Miyata S."/>
            <person name="Ugaki M."/>
            <person name="Namba S."/>
        </authorList>
    </citation>
    <scope>NUCLEOTIDE SEQUENCE [LARGE SCALE GENOMIC DNA]</scope>
    <source>
        <strain>OY-M</strain>
    </source>
</reference>
<name>SYFA_ONYPE</name>
<organism>
    <name type="scientific">Onion yellows phytoplasma (strain OY-M)</name>
    <dbReference type="NCBI Taxonomy" id="262768"/>
    <lineage>
        <taxon>Bacteria</taxon>
        <taxon>Bacillati</taxon>
        <taxon>Mycoplasmatota</taxon>
        <taxon>Mollicutes</taxon>
        <taxon>Acholeplasmatales</taxon>
        <taxon>Acholeplasmataceae</taxon>
        <taxon>Candidatus Phytoplasma</taxon>
        <taxon>16SrI (Aster yellows group)</taxon>
    </lineage>
</organism>
<gene>
    <name evidence="1" type="primary">pheS</name>
    <name type="ordered locus">PAM_596</name>
</gene>
<evidence type="ECO:0000255" key="1">
    <source>
        <dbReference type="HAMAP-Rule" id="MF_00281"/>
    </source>
</evidence>
<proteinExistence type="inferred from homology"/>
<protein>
    <recommendedName>
        <fullName evidence="1">Phenylalanine--tRNA ligase alpha subunit</fullName>
        <ecNumber evidence="1">6.1.1.20</ecNumber>
    </recommendedName>
    <alternativeName>
        <fullName evidence="1">Phenylalanyl-tRNA synthetase alpha subunit</fullName>
        <shortName evidence="1">PheRS</shortName>
    </alternativeName>
</protein>
<accession>Q6YPX9</accession>
<comment type="catalytic activity">
    <reaction evidence="1">
        <text>tRNA(Phe) + L-phenylalanine + ATP = L-phenylalanyl-tRNA(Phe) + AMP + diphosphate + H(+)</text>
        <dbReference type="Rhea" id="RHEA:19413"/>
        <dbReference type="Rhea" id="RHEA-COMP:9668"/>
        <dbReference type="Rhea" id="RHEA-COMP:9699"/>
        <dbReference type="ChEBI" id="CHEBI:15378"/>
        <dbReference type="ChEBI" id="CHEBI:30616"/>
        <dbReference type="ChEBI" id="CHEBI:33019"/>
        <dbReference type="ChEBI" id="CHEBI:58095"/>
        <dbReference type="ChEBI" id="CHEBI:78442"/>
        <dbReference type="ChEBI" id="CHEBI:78531"/>
        <dbReference type="ChEBI" id="CHEBI:456215"/>
        <dbReference type="EC" id="6.1.1.20"/>
    </reaction>
</comment>
<comment type="cofactor">
    <cofactor evidence="1">
        <name>Mg(2+)</name>
        <dbReference type="ChEBI" id="CHEBI:18420"/>
    </cofactor>
    <text evidence="1">Binds 2 magnesium ions per tetramer.</text>
</comment>
<comment type="subunit">
    <text evidence="1">Tetramer of two alpha and two beta subunits.</text>
</comment>
<comment type="subcellular location">
    <subcellularLocation>
        <location evidence="1">Cytoplasm</location>
    </subcellularLocation>
</comment>
<comment type="similarity">
    <text evidence="1">Belongs to the class-II aminoacyl-tRNA synthetase family. Phe-tRNA synthetase alpha subunit type 1 subfamily.</text>
</comment>
<dbReference type="EC" id="6.1.1.20" evidence="1"/>
<dbReference type="EMBL" id="AP006628">
    <property type="protein sequence ID" value="BAD04681.1"/>
    <property type="molecule type" value="Genomic_DNA"/>
</dbReference>
<dbReference type="SMR" id="Q6YPX9"/>
<dbReference type="STRING" id="262768.PAM_596"/>
<dbReference type="KEGG" id="poy:PAM_596"/>
<dbReference type="eggNOG" id="COG0016">
    <property type="taxonomic scope" value="Bacteria"/>
</dbReference>
<dbReference type="HOGENOM" id="CLU_025086_0_1_14"/>
<dbReference type="BioCyc" id="OYEL262768:G1G26-721-MONOMER"/>
<dbReference type="Proteomes" id="UP000002523">
    <property type="component" value="Chromosome"/>
</dbReference>
<dbReference type="GO" id="GO:0005737">
    <property type="term" value="C:cytoplasm"/>
    <property type="evidence" value="ECO:0007669"/>
    <property type="project" value="UniProtKB-SubCell"/>
</dbReference>
<dbReference type="GO" id="GO:0005524">
    <property type="term" value="F:ATP binding"/>
    <property type="evidence" value="ECO:0007669"/>
    <property type="project" value="UniProtKB-UniRule"/>
</dbReference>
<dbReference type="GO" id="GO:0000287">
    <property type="term" value="F:magnesium ion binding"/>
    <property type="evidence" value="ECO:0007669"/>
    <property type="project" value="UniProtKB-UniRule"/>
</dbReference>
<dbReference type="GO" id="GO:0004826">
    <property type="term" value="F:phenylalanine-tRNA ligase activity"/>
    <property type="evidence" value="ECO:0007669"/>
    <property type="project" value="UniProtKB-UniRule"/>
</dbReference>
<dbReference type="GO" id="GO:0000049">
    <property type="term" value="F:tRNA binding"/>
    <property type="evidence" value="ECO:0007669"/>
    <property type="project" value="InterPro"/>
</dbReference>
<dbReference type="GO" id="GO:0006432">
    <property type="term" value="P:phenylalanyl-tRNA aminoacylation"/>
    <property type="evidence" value="ECO:0007669"/>
    <property type="project" value="UniProtKB-UniRule"/>
</dbReference>
<dbReference type="CDD" id="cd00496">
    <property type="entry name" value="PheRS_alpha_core"/>
    <property type="match status" value="1"/>
</dbReference>
<dbReference type="Gene3D" id="3.30.930.10">
    <property type="entry name" value="Bira Bifunctional Protein, Domain 2"/>
    <property type="match status" value="1"/>
</dbReference>
<dbReference type="HAMAP" id="MF_00281">
    <property type="entry name" value="Phe_tRNA_synth_alpha1"/>
    <property type="match status" value="1"/>
</dbReference>
<dbReference type="InterPro" id="IPR006195">
    <property type="entry name" value="aa-tRNA-synth_II"/>
</dbReference>
<dbReference type="InterPro" id="IPR045864">
    <property type="entry name" value="aa-tRNA-synth_II/BPL/LPL"/>
</dbReference>
<dbReference type="InterPro" id="IPR004529">
    <property type="entry name" value="Phe-tRNA-synth_IIc_asu"/>
</dbReference>
<dbReference type="InterPro" id="IPR004188">
    <property type="entry name" value="Phe-tRNA_ligase_II_N"/>
</dbReference>
<dbReference type="InterPro" id="IPR022911">
    <property type="entry name" value="Phe_tRNA_ligase_alpha1_bac"/>
</dbReference>
<dbReference type="InterPro" id="IPR002319">
    <property type="entry name" value="Phenylalanyl-tRNA_Synthase"/>
</dbReference>
<dbReference type="InterPro" id="IPR010978">
    <property type="entry name" value="tRNA-bd_arm"/>
</dbReference>
<dbReference type="NCBIfam" id="TIGR00468">
    <property type="entry name" value="pheS"/>
    <property type="match status" value="1"/>
</dbReference>
<dbReference type="PANTHER" id="PTHR11538:SF41">
    <property type="entry name" value="PHENYLALANINE--TRNA LIGASE, MITOCHONDRIAL"/>
    <property type="match status" value="1"/>
</dbReference>
<dbReference type="PANTHER" id="PTHR11538">
    <property type="entry name" value="PHENYLALANYL-TRNA SYNTHETASE"/>
    <property type="match status" value="1"/>
</dbReference>
<dbReference type="Pfam" id="PF02912">
    <property type="entry name" value="Phe_tRNA-synt_N"/>
    <property type="match status" value="1"/>
</dbReference>
<dbReference type="Pfam" id="PF01409">
    <property type="entry name" value="tRNA-synt_2d"/>
    <property type="match status" value="1"/>
</dbReference>
<dbReference type="SUPFAM" id="SSF55681">
    <property type="entry name" value="Class II aaRS and biotin synthetases"/>
    <property type="match status" value="1"/>
</dbReference>
<dbReference type="SUPFAM" id="SSF46589">
    <property type="entry name" value="tRNA-binding arm"/>
    <property type="match status" value="1"/>
</dbReference>
<dbReference type="PROSITE" id="PS50862">
    <property type="entry name" value="AA_TRNA_LIGASE_II"/>
    <property type="match status" value="1"/>
</dbReference>